<protein>
    <recommendedName>
        <fullName>Aldehyde oxidase 4</fullName>
        <ecNumber>1.2.3.1</ecNumber>
    </recommendedName>
    <alternativeName>
        <fullName>Aldehyde oxidase homolog 2</fullName>
    </alternativeName>
    <alternativeName>
        <fullName>Azaheterocycle hydroxylase 4</fullName>
        <ecNumber>1.17.3.-</ecNumber>
    </alternativeName>
    <alternativeName>
        <fullName>Retinal oxidase</fullName>
    </alternativeName>
</protein>
<feature type="chain" id="PRO_0000425249" description="Aldehyde oxidase 4">
    <location>
        <begin position="1"/>
        <end position="1341"/>
    </location>
</feature>
<feature type="domain" description="2Fe-2S ferredoxin-type" evidence="5">
    <location>
        <begin position="8"/>
        <end position="95"/>
    </location>
</feature>
<feature type="domain" description="FAD-binding PCMH-type" evidence="6">
    <location>
        <begin position="239"/>
        <end position="424"/>
    </location>
</feature>
<feature type="active site" description="Proton acceptor; for azaheterocycle hydroxylase activity" evidence="3">
    <location>
        <position position="1268"/>
    </location>
</feature>
<feature type="binding site" evidence="4">
    <location>
        <position position="47"/>
    </location>
    <ligand>
        <name>[2Fe-2S] cluster</name>
        <dbReference type="ChEBI" id="CHEBI:190135"/>
        <label>1</label>
    </ligand>
</feature>
<feature type="binding site" evidence="4">
    <location>
        <position position="52"/>
    </location>
    <ligand>
        <name>[2Fe-2S] cluster</name>
        <dbReference type="ChEBI" id="CHEBI:190135"/>
        <label>1</label>
    </ligand>
</feature>
<feature type="binding site" evidence="4">
    <location>
        <position position="55"/>
    </location>
    <ligand>
        <name>[2Fe-2S] cluster</name>
        <dbReference type="ChEBI" id="CHEBI:190135"/>
        <label>1</label>
    </ligand>
</feature>
<feature type="binding site" evidence="4">
    <location>
        <position position="77"/>
    </location>
    <ligand>
        <name>[2Fe-2S] cluster</name>
        <dbReference type="ChEBI" id="CHEBI:190135"/>
        <label>1</label>
    </ligand>
</feature>
<feature type="binding site" evidence="4">
    <location>
        <position position="116"/>
    </location>
    <ligand>
        <name>Mo-molybdopterin</name>
        <dbReference type="ChEBI" id="CHEBI:71302"/>
    </ligand>
</feature>
<feature type="binding site" evidence="4">
    <location>
        <position position="117"/>
    </location>
    <ligand>
        <name>[2Fe-2S] cluster</name>
        <dbReference type="ChEBI" id="CHEBI:190135"/>
        <label>2</label>
    </ligand>
</feature>
<feature type="binding site" evidence="4">
    <location>
        <position position="120"/>
    </location>
    <ligand>
        <name>[2Fe-2S] cluster</name>
        <dbReference type="ChEBI" id="CHEBI:190135"/>
        <label>2</label>
    </ligand>
</feature>
<feature type="binding site" evidence="4">
    <location>
        <position position="152"/>
    </location>
    <ligand>
        <name>[2Fe-2S] cluster</name>
        <dbReference type="ChEBI" id="CHEBI:190135"/>
        <label>2</label>
    </ligand>
</feature>
<feature type="binding site" evidence="4">
    <location>
        <position position="154"/>
    </location>
    <ligand>
        <name>[2Fe-2S] cluster</name>
        <dbReference type="ChEBI" id="CHEBI:190135"/>
        <label>2</label>
    </ligand>
</feature>
<feature type="binding site" evidence="4">
    <location>
        <position position="154"/>
    </location>
    <ligand>
        <name>Mo-molybdopterin</name>
        <dbReference type="ChEBI" id="CHEBI:71302"/>
    </ligand>
</feature>
<feature type="binding site" evidence="4">
    <location>
        <begin position="267"/>
        <end position="274"/>
    </location>
    <ligand>
        <name>FAD</name>
        <dbReference type="ChEBI" id="CHEBI:57692"/>
    </ligand>
</feature>
<feature type="binding site" evidence="4">
    <location>
        <position position="348"/>
    </location>
    <ligand>
        <name>FAD</name>
        <dbReference type="ChEBI" id="CHEBI:57692"/>
    </ligand>
</feature>
<feature type="binding site" evidence="2">
    <location>
        <position position="357"/>
    </location>
    <ligand>
        <name>FAD</name>
        <dbReference type="ChEBI" id="CHEBI:57692"/>
    </ligand>
</feature>
<feature type="binding site" evidence="4">
    <location>
        <position position="361"/>
    </location>
    <ligand>
        <name>FAD</name>
        <dbReference type="ChEBI" id="CHEBI:57692"/>
    </ligand>
</feature>
<feature type="binding site" evidence="4">
    <location>
        <position position="370"/>
    </location>
    <ligand>
        <name>FAD</name>
        <dbReference type="ChEBI" id="CHEBI:57692"/>
    </ligand>
</feature>
<feature type="binding site" evidence="4">
    <location>
        <position position="414"/>
    </location>
    <ligand>
        <name>FAD</name>
        <dbReference type="ChEBI" id="CHEBI:57692"/>
    </ligand>
</feature>
<feature type="binding site" evidence="4">
    <location>
        <begin position="805"/>
        <end position="806"/>
    </location>
    <ligand>
        <name>Mo-molybdopterin</name>
        <dbReference type="ChEBI" id="CHEBI:71302"/>
    </ligand>
</feature>
<feature type="binding site" evidence="2">
    <location>
        <position position="805"/>
    </location>
    <ligand>
        <name>Mo-molybdopterin</name>
        <dbReference type="ChEBI" id="CHEBI:71302"/>
    </ligand>
</feature>
<feature type="binding site" evidence="2">
    <location>
        <position position="1046"/>
    </location>
    <ligand>
        <name>Mo-molybdopterin</name>
        <dbReference type="ChEBI" id="CHEBI:71302"/>
    </ligand>
</feature>
<feature type="binding site" evidence="4">
    <location>
        <begin position="1087"/>
        <end position="1090"/>
    </location>
    <ligand>
        <name>Mo-molybdopterin</name>
        <dbReference type="ChEBI" id="CHEBI:71302"/>
    </ligand>
</feature>
<feature type="binding site" evidence="4">
    <location>
        <position position="1202"/>
    </location>
    <ligand>
        <name>Mo-molybdopterin</name>
        <dbReference type="ChEBI" id="CHEBI:71302"/>
    </ligand>
</feature>
<feature type="binding site" evidence="4">
    <location>
        <position position="1266"/>
    </location>
    <ligand>
        <name>Mo-molybdopterin</name>
        <dbReference type="ChEBI" id="CHEBI:71302"/>
    </ligand>
</feature>
<feature type="sequence conflict" description="In Ref. 1; AFG18182." evidence="8" ref="1">
    <original>H</original>
    <variation>Q</variation>
    <location>
        <position position="39"/>
    </location>
</feature>
<feature type="sequence conflict" description="In Ref. 1; AFG18182." evidence="8" ref="1">
    <original>E</original>
    <variation>V</variation>
    <location>
        <position position="145"/>
    </location>
</feature>
<feature type="sequence conflict" description="In Ref. 1; AFG18182." evidence="8" ref="1">
    <original>R</original>
    <variation>G</variation>
    <location>
        <position position="405"/>
    </location>
</feature>
<feature type="sequence conflict" description="In Ref. 1; AFG18182." evidence="8" ref="1">
    <original>L</original>
    <variation>F</variation>
    <location>
        <position position="504"/>
    </location>
</feature>
<feature type="sequence conflict" description="In Ref. 1; AFG18182." evidence="8" ref="1">
    <original>H</original>
    <variation>R</variation>
    <location>
        <position position="624"/>
    </location>
</feature>
<feature type="sequence conflict" description="In Ref. 1; AFG18182." evidence="8" ref="1">
    <original>M</original>
    <variation>V</variation>
    <location>
        <position position="935"/>
    </location>
</feature>
<feature type="sequence conflict" description="In Ref. 1; AFG18182." evidence="8" ref="1">
    <original>M</original>
    <variation>V</variation>
    <location>
        <position position="1008"/>
    </location>
</feature>
<name>AOXD_CAVPO</name>
<proteinExistence type="evidence at transcript level"/>
<dbReference type="EC" id="1.2.3.1"/>
<dbReference type="EC" id="1.17.3.-"/>
<dbReference type="EMBL" id="JQ280310">
    <property type="protein sequence ID" value="AFG18182.1"/>
    <property type="molecule type" value="mRNA"/>
</dbReference>
<dbReference type="EMBL" id="AAKN02051282">
    <property type="status" value="NOT_ANNOTATED_CDS"/>
    <property type="molecule type" value="Genomic_DNA"/>
</dbReference>
<dbReference type="EMBL" id="AAKN02051283">
    <property type="status" value="NOT_ANNOTATED_CDS"/>
    <property type="molecule type" value="Genomic_DNA"/>
</dbReference>
<dbReference type="RefSeq" id="NP_001265709.1">
    <property type="nucleotide sequence ID" value="NM_001278780.1"/>
</dbReference>
<dbReference type="SMR" id="H9TB18"/>
<dbReference type="FunCoup" id="H9TB18">
    <property type="interactions" value="362"/>
</dbReference>
<dbReference type="STRING" id="10141.ENSCPOP00000016070"/>
<dbReference type="Ensembl" id="ENSCPOT00000021726.2">
    <property type="protein sequence ID" value="ENSCPOP00000016070.1"/>
    <property type="gene ID" value="ENSCPOG00000033032.1"/>
</dbReference>
<dbReference type="GeneID" id="100714172"/>
<dbReference type="KEGG" id="cpoc:100714172"/>
<dbReference type="CTD" id="71872"/>
<dbReference type="VEuPathDB" id="HostDB:ENSCPOG00000033032"/>
<dbReference type="eggNOG" id="KOG0430">
    <property type="taxonomic scope" value="Eukaryota"/>
</dbReference>
<dbReference type="GeneTree" id="ENSGT00950000183114"/>
<dbReference type="InParanoid" id="H9TB18"/>
<dbReference type="OMA" id="AQSEVIC"/>
<dbReference type="OrthoDB" id="8300278at2759"/>
<dbReference type="Proteomes" id="UP000005447">
    <property type="component" value="Unassembled WGS sequence"/>
</dbReference>
<dbReference type="Bgee" id="ENSCPOG00000033032">
    <property type="expression patterns" value="Expressed in uterine cervix and 2 other cell types or tissues"/>
</dbReference>
<dbReference type="GO" id="GO:0005829">
    <property type="term" value="C:cytosol"/>
    <property type="evidence" value="ECO:0000250"/>
    <property type="project" value="UniProtKB"/>
</dbReference>
<dbReference type="GO" id="GO:0051537">
    <property type="term" value="F:2 iron, 2 sulfur cluster binding"/>
    <property type="evidence" value="ECO:0000250"/>
    <property type="project" value="UniProtKB"/>
</dbReference>
<dbReference type="GO" id="GO:0004031">
    <property type="term" value="F:aldehyde oxidase activity"/>
    <property type="evidence" value="ECO:0000250"/>
    <property type="project" value="UniProtKB"/>
</dbReference>
<dbReference type="GO" id="GO:0071949">
    <property type="term" value="F:FAD binding"/>
    <property type="evidence" value="ECO:0007669"/>
    <property type="project" value="InterPro"/>
</dbReference>
<dbReference type="GO" id="GO:0050660">
    <property type="term" value="F:flavin adenine dinucleotide binding"/>
    <property type="evidence" value="ECO:0000250"/>
    <property type="project" value="UniProtKB"/>
</dbReference>
<dbReference type="GO" id="GO:0005506">
    <property type="term" value="F:iron ion binding"/>
    <property type="evidence" value="ECO:0000250"/>
    <property type="project" value="UniProtKB"/>
</dbReference>
<dbReference type="GO" id="GO:0043546">
    <property type="term" value="F:molybdopterin cofactor binding"/>
    <property type="evidence" value="ECO:0000250"/>
    <property type="project" value="UniProtKB"/>
</dbReference>
<dbReference type="GO" id="GO:0051287">
    <property type="term" value="F:NAD binding"/>
    <property type="evidence" value="ECO:0007669"/>
    <property type="project" value="InterPro"/>
</dbReference>
<dbReference type="GO" id="GO:0042803">
    <property type="term" value="F:protein homodimerization activity"/>
    <property type="evidence" value="ECO:0000250"/>
    <property type="project" value="UniProtKB"/>
</dbReference>
<dbReference type="GO" id="GO:0006805">
    <property type="term" value="P:xenobiotic metabolic process"/>
    <property type="evidence" value="ECO:0000250"/>
    <property type="project" value="UniProtKB"/>
</dbReference>
<dbReference type="CDD" id="cd00207">
    <property type="entry name" value="fer2"/>
    <property type="match status" value="1"/>
</dbReference>
<dbReference type="FunFam" id="1.10.150.120:FF:000001">
    <property type="entry name" value="Aldehyde oxidase 1"/>
    <property type="match status" value="1"/>
</dbReference>
<dbReference type="FunFam" id="3.10.20.30:FF:000015">
    <property type="entry name" value="Aldehyde oxidase 1"/>
    <property type="match status" value="1"/>
</dbReference>
<dbReference type="FunFam" id="3.30.365.10:FF:000003">
    <property type="entry name" value="Aldehyde oxidase 1"/>
    <property type="match status" value="1"/>
</dbReference>
<dbReference type="FunFam" id="3.90.1170.50:FF:000001">
    <property type="entry name" value="Aldehyde oxidase 1"/>
    <property type="match status" value="1"/>
</dbReference>
<dbReference type="FunFam" id="3.30.365.10:FF:000025">
    <property type="entry name" value="Aldehyde oxidase 4"/>
    <property type="match status" value="1"/>
</dbReference>
<dbReference type="FunFam" id="3.30.365.10:FF:000001">
    <property type="entry name" value="Xanthine dehydrogenase oxidase"/>
    <property type="match status" value="1"/>
</dbReference>
<dbReference type="FunFam" id="3.30.365.10:FF:000004">
    <property type="entry name" value="Xanthine dehydrogenase oxidase"/>
    <property type="match status" value="1"/>
</dbReference>
<dbReference type="FunFam" id="3.30.390.50:FF:000001">
    <property type="entry name" value="Xanthine dehydrogenase oxidase"/>
    <property type="match status" value="1"/>
</dbReference>
<dbReference type="FunFam" id="3.30.43.10:FF:000001">
    <property type="entry name" value="Xanthine dehydrogenase/oxidase"/>
    <property type="match status" value="1"/>
</dbReference>
<dbReference type="FunFam" id="3.30.465.10:FF:000004">
    <property type="entry name" value="Xanthine dehydrogenase/oxidase"/>
    <property type="match status" value="1"/>
</dbReference>
<dbReference type="Gene3D" id="3.10.20.30">
    <property type="match status" value="1"/>
</dbReference>
<dbReference type="Gene3D" id="3.30.465.10">
    <property type="match status" value="1"/>
</dbReference>
<dbReference type="Gene3D" id="1.10.150.120">
    <property type="entry name" value="[2Fe-2S]-binding domain"/>
    <property type="match status" value="1"/>
</dbReference>
<dbReference type="Gene3D" id="3.90.1170.50">
    <property type="entry name" value="Aldehyde oxidase/xanthine dehydrogenase, a/b hammerhead"/>
    <property type="match status" value="1"/>
</dbReference>
<dbReference type="Gene3D" id="3.30.365.10">
    <property type="entry name" value="Aldehyde oxidase/xanthine dehydrogenase, molybdopterin binding domain"/>
    <property type="match status" value="4"/>
</dbReference>
<dbReference type="Gene3D" id="3.30.390.50">
    <property type="entry name" value="CO dehydrogenase flavoprotein, C-terminal domain"/>
    <property type="match status" value="1"/>
</dbReference>
<dbReference type="Gene3D" id="3.30.43.10">
    <property type="entry name" value="Uridine Diphospho-n-acetylenolpyruvylglucosamine Reductase, domain 2"/>
    <property type="match status" value="1"/>
</dbReference>
<dbReference type="InterPro" id="IPR002888">
    <property type="entry name" value="2Fe-2S-bd"/>
</dbReference>
<dbReference type="InterPro" id="IPR036884">
    <property type="entry name" value="2Fe-2S-bd_dom_sf"/>
</dbReference>
<dbReference type="InterPro" id="IPR036010">
    <property type="entry name" value="2Fe-2S_ferredoxin-like_sf"/>
</dbReference>
<dbReference type="InterPro" id="IPR001041">
    <property type="entry name" value="2Fe-2S_ferredoxin-type"/>
</dbReference>
<dbReference type="InterPro" id="IPR006058">
    <property type="entry name" value="2Fe2S_fd_BS"/>
</dbReference>
<dbReference type="InterPro" id="IPR000674">
    <property type="entry name" value="Ald_Oxase/Xan_DH_a/b"/>
</dbReference>
<dbReference type="InterPro" id="IPR036856">
    <property type="entry name" value="Ald_Oxase/Xan_DH_a/b_sf"/>
</dbReference>
<dbReference type="InterPro" id="IPR016208">
    <property type="entry name" value="Ald_Oxase/xanthine_DH-like"/>
</dbReference>
<dbReference type="InterPro" id="IPR014313">
    <property type="entry name" value="Aldehyde_oxidase"/>
</dbReference>
<dbReference type="InterPro" id="IPR008274">
    <property type="entry name" value="AldOxase/xan_DH_MoCoBD1"/>
</dbReference>
<dbReference type="InterPro" id="IPR046867">
    <property type="entry name" value="AldOxase/xan_DH_MoCoBD2"/>
</dbReference>
<dbReference type="InterPro" id="IPR037165">
    <property type="entry name" value="AldOxase/xan_DH_Mopterin-bd_sf"/>
</dbReference>
<dbReference type="InterPro" id="IPR012675">
    <property type="entry name" value="Beta-grasp_dom_sf"/>
</dbReference>
<dbReference type="InterPro" id="IPR005107">
    <property type="entry name" value="CO_DH_flav_C"/>
</dbReference>
<dbReference type="InterPro" id="IPR036683">
    <property type="entry name" value="CO_DH_flav_C_dom_sf"/>
</dbReference>
<dbReference type="InterPro" id="IPR016166">
    <property type="entry name" value="FAD-bd_PCMH"/>
</dbReference>
<dbReference type="InterPro" id="IPR036318">
    <property type="entry name" value="FAD-bd_PCMH-like_sf"/>
</dbReference>
<dbReference type="InterPro" id="IPR016167">
    <property type="entry name" value="FAD-bd_PCMH_sub1"/>
</dbReference>
<dbReference type="InterPro" id="IPR016169">
    <property type="entry name" value="FAD-bd_PCMH_sub2"/>
</dbReference>
<dbReference type="InterPro" id="IPR002346">
    <property type="entry name" value="Mopterin_DH_FAD-bd"/>
</dbReference>
<dbReference type="NCBIfam" id="TIGR02969">
    <property type="entry name" value="mam_aldehyde_ox"/>
    <property type="match status" value="1"/>
</dbReference>
<dbReference type="PANTHER" id="PTHR45444">
    <property type="entry name" value="XANTHINE DEHYDROGENASE"/>
    <property type="match status" value="1"/>
</dbReference>
<dbReference type="PANTHER" id="PTHR45444:SF3">
    <property type="entry name" value="XANTHINE DEHYDROGENASE"/>
    <property type="match status" value="1"/>
</dbReference>
<dbReference type="Pfam" id="PF01315">
    <property type="entry name" value="Ald_Xan_dh_C"/>
    <property type="match status" value="1"/>
</dbReference>
<dbReference type="Pfam" id="PF03450">
    <property type="entry name" value="CO_deh_flav_C"/>
    <property type="match status" value="1"/>
</dbReference>
<dbReference type="Pfam" id="PF00941">
    <property type="entry name" value="FAD_binding_5"/>
    <property type="match status" value="1"/>
</dbReference>
<dbReference type="Pfam" id="PF00111">
    <property type="entry name" value="Fer2"/>
    <property type="match status" value="1"/>
</dbReference>
<dbReference type="Pfam" id="PF01799">
    <property type="entry name" value="Fer2_2"/>
    <property type="match status" value="1"/>
</dbReference>
<dbReference type="Pfam" id="PF02738">
    <property type="entry name" value="MoCoBD_1"/>
    <property type="match status" value="1"/>
</dbReference>
<dbReference type="Pfam" id="PF20256">
    <property type="entry name" value="MoCoBD_2"/>
    <property type="match status" value="1"/>
</dbReference>
<dbReference type="PIRSF" id="PIRSF000127">
    <property type="entry name" value="Xanthine_DH"/>
    <property type="match status" value="1"/>
</dbReference>
<dbReference type="SMART" id="SM01008">
    <property type="entry name" value="Ald_Xan_dh_C"/>
    <property type="match status" value="1"/>
</dbReference>
<dbReference type="SMART" id="SM01092">
    <property type="entry name" value="CO_deh_flav_C"/>
    <property type="match status" value="1"/>
</dbReference>
<dbReference type="SUPFAM" id="SSF54292">
    <property type="entry name" value="2Fe-2S ferredoxin-like"/>
    <property type="match status" value="1"/>
</dbReference>
<dbReference type="SUPFAM" id="SSF55447">
    <property type="entry name" value="CO dehydrogenase flavoprotein C-terminal domain-like"/>
    <property type="match status" value="1"/>
</dbReference>
<dbReference type="SUPFAM" id="SSF47741">
    <property type="entry name" value="CO dehydrogenase ISP C-domain like"/>
    <property type="match status" value="1"/>
</dbReference>
<dbReference type="SUPFAM" id="SSF54665">
    <property type="entry name" value="CO dehydrogenase molybdoprotein N-domain-like"/>
    <property type="match status" value="1"/>
</dbReference>
<dbReference type="SUPFAM" id="SSF56176">
    <property type="entry name" value="FAD-binding/transporter-associated domain-like"/>
    <property type="match status" value="1"/>
</dbReference>
<dbReference type="SUPFAM" id="SSF56003">
    <property type="entry name" value="Molybdenum cofactor-binding domain"/>
    <property type="match status" value="1"/>
</dbReference>
<dbReference type="PROSITE" id="PS00197">
    <property type="entry name" value="2FE2S_FER_1"/>
    <property type="match status" value="1"/>
</dbReference>
<dbReference type="PROSITE" id="PS51085">
    <property type="entry name" value="2FE2S_FER_2"/>
    <property type="match status" value="1"/>
</dbReference>
<dbReference type="PROSITE" id="PS51387">
    <property type="entry name" value="FAD_PCMH"/>
    <property type="match status" value="1"/>
</dbReference>
<sequence length="1341" mass="147634">MPSLSGSDELIFFVNGKKVVVKKPDPEVTLLFYLRRELHLTGTKFACGEGGCGACTVMVSRYSASSKQIRHYPVTACLVPICSLHGAAVTTVEGVGSIRTRVHPVQERLAKCHGTQCGFCSPGMVMSIYTLLRNHPDPTPEQVTEALGGNLCRCTGYRPIVESGKTFCANPTVCQVKRPGRCCLEQEEEEAGSVHTREKMCTKLYDKDEFQPLDPSQEPIFPPELIRMAEDPNKRRLTFQGERTTWLAPATLPDLLELRAEFPQAPLIMGNTTVGPDIKFKGEFHPVFVSPLELPELCVLNSEGDGVTVGSGHSLAQLSDALQSIVSQQPSERTETCRALLNHLRTLAGVQIRSMATLGGHVATRATVSDLNPILAAGKTTIHLVSKEGERQIPLDGAFLEGSPRAGLRPGEIVLSVFIPYSSQWQFVSGLRQAQRQENAMAIVNAGMSVRLEDGSSTIRDLQVFYGGIGPTVLSASRTCGQLVGRQWDDQMLGEACRGILDELRLPPGAKGGQVEFRHTLMLSLLFKFYLRVQRALSKLDPQKFPDIPEEYTSALEEFPIGTPQGTQIFRCVDPHQPPQDPVGHPVMHQAGLKHATGEAAFVDDLPLVSQELFLAVVTSTRAHAKIISIDTGEALALPGVVAVITAEDVPGENNHQGEIFYAQREVVCVGQIVCTVAADTYAHAREAAQKVKVEYEDIEPRIITIEQALEHSSFLSPERKIEQGNVEQAFKHVDQVIEGEVHVEGQEHFYMETQTILAVPRAEDKEMVLHLGTQFPTHVQEFVATALNVPRNRIACHMRRAGGAFGGKVTKPALLGAVAAVAAKKTGRPIRFVLERGDDMLITAGRHPLLGRYKVGFMKSGLIKAVDLEFYINGGCTPDESQLVIEYVVLKSENAYYIPNFRCRGRACKTNLPSNTAFRGFGFPQATVVVEAYMTAVASHCDLLPEEVREMNMYKRPSQTAYRQRFDPEPLRRCWKDCLEHSSFHARKRAAEDFNRQSRWKKRGLAMIPMKYTIGVPVAYYHQAAALVHIYLDGSVLLTHGGCELGQGLHTKMMQVASRELGIPTSYIHLSETSTVTVPNAVFTAGSMGTDINGKAVQNACQTLMARLQPVIRRNPKGKWEEWIKKAFEESISLSATGYFRGFQTNMDWDKERGDAFPYYVYGAACAEVDVDCLSGAHKLLRADIFMDAAFSINPAVDIGQIEGAFVQGMGLYTTEELKYSPKGKLRSQGTNDYKIPTVTEIPEEFHVTLVHSRNPVAIYSSKGLGEAGMFLGSSVISAIWDAVAAARKERKGAESVPETLAVRSPATPEWIRMACVDQFTDMIPRDDPSTFTPWSICVS</sequence>
<keyword id="KW-0001">2Fe-2S</keyword>
<keyword id="KW-0963">Cytoplasm</keyword>
<keyword id="KW-0274">FAD</keyword>
<keyword id="KW-0285">Flavoprotein</keyword>
<keyword id="KW-0408">Iron</keyword>
<keyword id="KW-0411">Iron-sulfur</keyword>
<keyword id="KW-0479">Metal-binding</keyword>
<keyword id="KW-0500">Molybdenum</keyword>
<keyword id="KW-0560">Oxidoreductase</keyword>
<keyword id="KW-1185">Reference proteome</keyword>
<gene>
    <name type="primary">AOX4</name>
</gene>
<accession>H9TB18</accession>
<comment type="function">
    <text evidence="1">Aldehyde oxidase able to catalyze the oxidation of retinaldehyde into retinoate. Acts as a negative modulator of the epidermal trophism. May be able to oxidize a wide variety of aldehydes into their corresponding carboxylates and to hydroxylate azaheterocycles (By similarity).</text>
</comment>
<comment type="catalytic activity">
    <reaction>
        <text>an aldehyde + O2 + H2O = a carboxylate + H2O2 + H(+)</text>
        <dbReference type="Rhea" id="RHEA:16829"/>
        <dbReference type="ChEBI" id="CHEBI:15377"/>
        <dbReference type="ChEBI" id="CHEBI:15378"/>
        <dbReference type="ChEBI" id="CHEBI:15379"/>
        <dbReference type="ChEBI" id="CHEBI:16240"/>
        <dbReference type="ChEBI" id="CHEBI:17478"/>
        <dbReference type="ChEBI" id="CHEBI:29067"/>
        <dbReference type="EC" id="1.2.3.1"/>
    </reaction>
</comment>
<comment type="catalytic activity">
    <reaction>
        <text>retinal + O2 + H2O = retinoate + H2O2 + H(+)</text>
        <dbReference type="Rhea" id="RHEA:56736"/>
        <dbReference type="ChEBI" id="CHEBI:15035"/>
        <dbReference type="ChEBI" id="CHEBI:15036"/>
        <dbReference type="ChEBI" id="CHEBI:15377"/>
        <dbReference type="ChEBI" id="CHEBI:15378"/>
        <dbReference type="ChEBI" id="CHEBI:15379"/>
        <dbReference type="ChEBI" id="CHEBI:16240"/>
    </reaction>
</comment>
<comment type="cofactor">
    <cofactor evidence="2">
        <name>[2Fe-2S] cluster</name>
        <dbReference type="ChEBI" id="CHEBI:190135"/>
    </cofactor>
    <text evidence="2">Binds 2 [2Fe-2S] clusters per subunit.</text>
</comment>
<comment type="cofactor">
    <cofactor evidence="2">
        <name>FAD</name>
        <dbReference type="ChEBI" id="CHEBI:57692"/>
    </cofactor>
    <text evidence="2">Binds 1 FAD per subunit.</text>
</comment>
<comment type="cofactor">
    <cofactor evidence="2">
        <name>Mo-molybdopterin</name>
        <dbReference type="ChEBI" id="CHEBI:71302"/>
    </cofactor>
    <text evidence="2">Binds 1 Mo-molybdopterin (Mo-MPT) cofactor per subunit.</text>
</comment>
<comment type="subunit">
    <text evidence="2">Homodimer.</text>
</comment>
<comment type="subcellular location">
    <subcellularLocation>
        <location evidence="1">Cytoplasm</location>
    </subcellularLocation>
</comment>
<comment type="tissue specificity">
    <text evidence="7">Detected in liver, testis, kidney, brain, Harderian gland and olfactory mucosa.</text>
</comment>
<comment type="miscellaneous">
    <text evidence="9">AOX genes evolved from a xanthine oxidoreductase ancestral precursor via a series of gene duplication and suppression/deletion events. Different animal species contain a different complement of AOX genes encoding an equivalent number of AOX isoenzymes. In mammals, the two extremes are represented by certain rodents such as mice and rats, which are endowed with 4 AOX genes, and by humans, whose genome is characterized by a single active gene (PubMed:23263164).</text>
</comment>
<comment type="similarity">
    <text evidence="8">Belongs to the xanthine dehydrogenase family.</text>
</comment>
<reference key="1">
    <citation type="journal article" date="2013" name="Cell. Mol. Life Sci.">
        <title>Structure and evolution of vertebrate aldehyde oxidases: from gene duplication to gene suppression.</title>
        <authorList>
            <person name="Kurosaki M."/>
            <person name="Bolis M."/>
            <person name="Fratelli M."/>
            <person name="Barzago M.M."/>
            <person name="Pattini L."/>
            <person name="Perretta G."/>
            <person name="Terao M."/>
            <person name="Garattini E."/>
        </authorList>
    </citation>
    <scope>NUCLEOTIDE SEQUENCE [MRNA]</scope>
    <scope>TISSUE SPECIFICITY</scope>
    <scope>IDENTIFICATION OF PARALOGS</scope>
</reference>
<reference key="2">
    <citation type="journal article" date="2011" name="Nature">
        <title>A high-resolution map of human evolutionary constraint using 29 mammals.</title>
        <authorList>
            <person name="Lindblad-Toh K."/>
            <person name="Garber M."/>
            <person name="Zuk O."/>
            <person name="Lin M.F."/>
            <person name="Parker B.J."/>
            <person name="Washietl S."/>
            <person name="Kheradpour P."/>
            <person name="Ernst J."/>
            <person name="Jordan G."/>
            <person name="Mauceli E."/>
            <person name="Ward L.D."/>
            <person name="Lowe C.B."/>
            <person name="Holloway A.K."/>
            <person name="Clamp M."/>
            <person name="Gnerre S."/>
            <person name="Alfoldi J."/>
            <person name="Beal K."/>
            <person name="Chang J."/>
            <person name="Clawson H."/>
            <person name="Cuff J."/>
            <person name="Di Palma F."/>
            <person name="Fitzgerald S."/>
            <person name="Flicek P."/>
            <person name="Guttman M."/>
            <person name="Hubisz M.J."/>
            <person name="Jaffe D.B."/>
            <person name="Jungreis I."/>
            <person name="Kent W.J."/>
            <person name="Kostka D."/>
            <person name="Lara M."/>
            <person name="Martins A.L."/>
            <person name="Massingham T."/>
            <person name="Moltke I."/>
            <person name="Raney B.J."/>
            <person name="Rasmussen M.D."/>
            <person name="Robinson J."/>
            <person name="Stark A."/>
            <person name="Vilella A.J."/>
            <person name="Wen J."/>
            <person name="Xie X."/>
            <person name="Zody M.C."/>
            <person name="Baldwin J."/>
            <person name="Bloom T."/>
            <person name="Chin C.W."/>
            <person name="Heiman D."/>
            <person name="Nicol R."/>
            <person name="Nusbaum C."/>
            <person name="Young S."/>
            <person name="Wilkinson J."/>
            <person name="Worley K.C."/>
            <person name="Kovar C.L."/>
            <person name="Muzny D.M."/>
            <person name="Gibbs R.A."/>
            <person name="Cree A."/>
            <person name="Dihn H.H."/>
            <person name="Fowler G."/>
            <person name="Jhangiani S."/>
            <person name="Joshi V."/>
            <person name="Lee S."/>
            <person name="Lewis L.R."/>
            <person name="Nazareth L.V."/>
            <person name="Okwuonu G."/>
            <person name="Santibanez J."/>
            <person name="Warren W.C."/>
            <person name="Mardis E.R."/>
            <person name="Weinstock G.M."/>
            <person name="Wilson R.K."/>
            <person name="Delehaunty K."/>
            <person name="Dooling D."/>
            <person name="Fronik C."/>
            <person name="Fulton L."/>
            <person name="Fulton B."/>
            <person name="Graves T."/>
            <person name="Minx P."/>
            <person name="Sodergren E."/>
            <person name="Birney E."/>
            <person name="Margulies E.H."/>
            <person name="Herrero J."/>
            <person name="Green E.D."/>
            <person name="Haussler D."/>
            <person name="Siepel A."/>
            <person name="Goldman N."/>
            <person name="Pollard K.S."/>
            <person name="Pedersen J.S."/>
            <person name="Lander E.S."/>
            <person name="Kellis M."/>
        </authorList>
    </citation>
    <scope>NUCLEOTIDE SEQUENCE [LARGE SCALE GENOMIC DNA]</scope>
    <source>
        <strain>2N</strain>
    </source>
</reference>
<evidence type="ECO:0000250" key="1"/>
<evidence type="ECO:0000250" key="2">
    <source>
        <dbReference type="UniProtKB" id="G3X982"/>
    </source>
</evidence>
<evidence type="ECO:0000250" key="3">
    <source>
        <dbReference type="UniProtKB" id="O54754"/>
    </source>
</evidence>
<evidence type="ECO:0000250" key="4">
    <source>
        <dbReference type="UniProtKB" id="Q06278"/>
    </source>
</evidence>
<evidence type="ECO:0000255" key="5">
    <source>
        <dbReference type="PROSITE-ProRule" id="PRU00465"/>
    </source>
</evidence>
<evidence type="ECO:0000255" key="6">
    <source>
        <dbReference type="PROSITE-ProRule" id="PRU00718"/>
    </source>
</evidence>
<evidence type="ECO:0000269" key="7">
    <source>
    </source>
</evidence>
<evidence type="ECO:0000305" key="8"/>
<evidence type="ECO:0000305" key="9">
    <source>
    </source>
</evidence>
<organism>
    <name type="scientific">Cavia porcellus</name>
    <name type="common">Guinea pig</name>
    <dbReference type="NCBI Taxonomy" id="10141"/>
    <lineage>
        <taxon>Eukaryota</taxon>
        <taxon>Metazoa</taxon>
        <taxon>Chordata</taxon>
        <taxon>Craniata</taxon>
        <taxon>Vertebrata</taxon>
        <taxon>Euteleostomi</taxon>
        <taxon>Mammalia</taxon>
        <taxon>Eutheria</taxon>
        <taxon>Euarchontoglires</taxon>
        <taxon>Glires</taxon>
        <taxon>Rodentia</taxon>
        <taxon>Hystricomorpha</taxon>
        <taxon>Caviidae</taxon>
        <taxon>Cavia</taxon>
    </lineage>
</organism>